<proteinExistence type="predicted"/>
<gene>
    <name type="ordered locus">At4g05475</name>
    <name type="ORF">C6L9</name>
</gene>
<name>FB221_ARATH</name>
<evidence type="ECO:0000255" key="1">
    <source>
        <dbReference type="PROSITE-ProRule" id="PRU00080"/>
    </source>
</evidence>
<evidence type="ECO:0000256" key="2">
    <source>
        <dbReference type="SAM" id="MobiDB-lite"/>
    </source>
</evidence>
<evidence type="ECO:0000305" key="3"/>
<sequence>MATSTTLQSLLMKEDEEQRNKRRTTSTMFLKKDDEERINWVDLPPELTTSILLRLSVTDILDNARKLCRAWRRICKDPSMWRKINLRDCLMYEFDFESMCRHIVDLSQGGLLEINIEHFVSDSLLSYIVDRSCNLKSLGISIYEPMTNKGVMNGIEKLPLLETLVIFHSSIKLDLKAIGHACPQLKTLKLNSLGSELAHDISQVGYIPLLECDDDALAIAESMPKLRHLQLMGNGLTNTGLNAILDGCPHLEEHLDVRKCFNINLVGNLEKRCMKRIKELRRPHDSTADYPYSISVSMVVQMMITSRYH</sequence>
<dbReference type="EMBL" id="AC012477">
    <property type="status" value="NOT_ANNOTATED_CDS"/>
    <property type="molecule type" value="Genomic_DNA"/>
</dbReference>
<dbReference type="EMBL" id="AL161503">
    <property type="protein sequence ID" value="CAB81090.1"/>
    <property type="status" value="ALT_SEQ"/>
    <property type="molecule type" value="Genomic_DNA"/>
</dbReference>
<dbReference type="EMBL" id="CP002687">
    <property type="protein sequence ID" value="AEE82525.1"/>
    <property type="molecule type" value="Genomic_DNA"/>
</dbReference>
<dbReference type="PIR" id="H85068">
    <property type="entry name" value="H85068"/>
</dbReference>
<dbReference type="RefSeq" id="NP_001190683.1">
    <property type="nucleotide sequence ID" value="NM_001203754.1"/>
</dbReference>
<dbReference type="SMR" id="Q9M0U7"/>
<dbReference type="FunCoup" id="Q9M0U7">
    <property type="interactions" value="513"/>
</dbReference>
<dbReference type="STRING" id="3702.Q9M0U7"/>
<dbReference type="iPTMnet" id="Q9M0U7"/>
<dbReference type="PaxDb" id="3702-AT4G05475.1"/>
<dbReference type="EnsemblPlants" id="AT4G05475.1">
    <property type="protein sequence ID" value="AT4G05475.1"/>
    <property type="gene ID" value="AT4G05475"/>
</dbReference>
<dbReference type="GeneID" id="10723048"/>
<dbReference type="Gramene" id="AT4G05475.1">
    <property type="protein sequence ID" value="AT4G05475.1"/>
    <property type="gene ID" value="AT4G05475"/>
</dbReference>
<dbReference type="KEGG" id="ath:AT4G05475"/>
<dbReference type="Araport" id="AT4G05475"/>
<dbReference type="TAIR" id="AT4G05475"/>
<dbReference type="eggNOG" id="KOG1947">
    <property type="taxonomic scope" value="Eukaryota"/>
</dbReference>
<dbReference type="HOGENOM" id="CLU_044915_0_0_1"/>
<dbReference type="InParanoid" id="Q9M0U7"/>
<dbReference type="OMA" id="KCARIRY"/>
<dbReference type="PRO" id="PR:Q9M0U7"/>
<dbReference type="Proteomes" id="UP000006548">
    <property type="component" value="Chromosome 4"/>
</dbReference>
<dbReference type="ExpressionAtlas" id="Q9M0U7">
    <property type="expression patterns" value="baseline and differential"/>
</dbReference>
<dbReference type="CDD" id="cd22164">
    <property type="entry name" value="F-box_AtSKIP19-like"/>
    <property type="match status" value="1"/>
</dbReference>
<dbReference type="Gene3D" id="1.20.1280.50">
    <property type="match status" value="1"/>
</dbReference>
<dbReference type="Gene3D" id="3.80.10.10">
    <property type="entry name" value="Ribonuclease Inhibitor"/>
    <property type="match status" value="1"/>
</dbReference>
<dbReference type="InterPro" id="IPR036047">
    <property type="entry name" value="F-box-like_dom_sf"/>
</dbReference>
<dbReference type="InterPro" id="IPR001810">
    <property type="entry name" value="F-box_dom"/>
</dbReference>
<dbReference type="InterPro" id="IPR032675">
    <property type="entry name" value="LRR_dom_sf"/>
</dbReference>
<dbReference type="PANTHER" id="PTHR38926">
    <property type="entry name" value="F-BOX DOMAIN CONTAINING PROTEIN, EXPRESSED"/>
    <property type="match status" value="1"/>
</dbReference>
<dbReference type="PANTHER" id="PTHR38926:SF2">
    <property type="entry name" value="F-BOX_LRR-REPEAT PROTEIN 21-RELATED"/>
    <property type="match status" value="1"/>
</dbReference>
<dbReference type="Pfam" id="PF12937">
    <property type="entry name" value="F-box-like"/>
    <property type="match status" value="1"/>
</dbReference>
<dbReference type="SMART" id="SM00256">
    <property type="entry name" value="FBOX"/>
    <property type="match status" value="1"/>
</dbReference>
<dbReference type="SUPFAM" id="SSF81383">
    <property type="entry name" value="F-box domain"/>
    <property type="match status" value="1"/>
</dbReference>
<dbReference type="SUPFAM" id="SSF52047">
    <property type="entry name" value="RNI-like"/>
    <property type="match status" value="1"/>
</dbReference>
<dbReference type="PROSITE" id="PS50181">
    <property type="entry name" value="FBOX"/>
    <property type="match status" value="1"/>
</dbReference>
<reference key="1">
    <citation type="journal article" date="1999" name="Nature">
        <title>Sequence and analysis of chromosome 4 of the plant Arabidopsis thaliana.</title>
        <authorList>
            <person name="Mayer K.F.X."/>
            <person name="Schueller C."/>
            <person name="Wambutt R."/>
            <person name="Murphy G."/>
            <person name="Volckaert G."/>
            <person name="Pohl T."/>
            <person name="Duesterhoeft A."/>
            <person name="Stiekema W."/>
            <person name="Entian K.-D."/>
            <person name="Terryn N."/>
            <person name="Harris B."/>
            <person name="Ansorge W."/>
            <person name="Brandt P."/>
            <person name="Grivell L.A."/>
            <person name="Rieger M."/>
            <person name="Weichselgartner M."/>
            <person name="de Simone V."/>
            <person name="Obermaier B."/>
            <person name="Mache R."/>
            <person name="Mueller M."/>
            <person name="Kreis M."/>
            <person name="Delseny M."/>
            <person name="Puigdomenech P."/>
            <person name="Watson M."/>
            <person name="Schmidtheini T."/>
            <person name="Reichert B."/>
            <person name="Portetelle D."/>
            <person name="Perez-Alonso M."/>
            <person name="Boutry M."/>
            <person name="Bancroft I."/>
            <person name="Vos P."/>
            <person name="Hoheisel J."/>
            <person name="Zimmermann W."/>
            <person name="Wedler H."/>
            <person name="Ridley P."/>
            <person name="Langham S.-A."/>
            <person name="McCullagh B."/>
            <person name="Bilham L."/>
            <person name="Robben J."/>
            <person name="van der Schueren J."/>
            <person name="Grymonprez B."/>
            <person name="Chuang Y.-J."/>
            <person name="Vandenbussche F."/>
            <person name="Braeken M."/>
            <person name="Weltjens I."/>
            <person name="Voet M."/>
            <person name="Bastiaens I."/>
            <person name="Aert R."/>
            <person name="Defoor E."/>
            <person name="Weitzenegger T."/>
            <person name="Bothe G."/>
            <person name="Ramsperger U."/>
            <person name="Hilbert H."/>
            <person name="Braun M."/>
            <person name="Holzer E."/>
            <person name="Brandt A."/>
            <person name="Peters S."/>
            <person name="van Staveren M."/>
            <person name="Dirkse W."/>
            <person name="Mooijman P."/>
            <person name="Klein Lankhorst R."/>
            <person name="Rose M."/>
            <person name="Hauf J."/>
            <person name="Koetter P."/>
            <person name="Berneiser S."/>
            <person name="Hempel S."/>
            <person name="Feldpausch M."/>
            <person name="Lamberth S."/>
            <person name="Van den Daele H."/>
            <person name="De Keyser A."/>
            <person name="Buysshaert C."/>
            <person name="Gielen J."/>
            <person name="Villarroel R."/>
            <person name="De Clercq R."/>
            <person name="van Montagu M."/>
            <person name="Rogers J."/>
            <person name="Cronin A."/>
            <person name="Quail M.A."/>
            <person name="Bray-Allen S."/>
            <person name="Clark L."/>
            <person name="Doggett J."/>
            <person name="Hall S."/>
            <person name="Kay M."/>
            <person name="Lennard N."/>
            <person name="McLay K."/>
            <person name="Mayes R."/>
            <person name="Pettett A."/>
            <person name="Rajandream M.A."/>
            <person name="Lyne M."/>
            <person name="Benes V."/>
            <person name="Rechmann S."/>
            <person name="Borkova D."/>
            <person name="Bloecker H."/>
            <person name="Scharfe M."/>
            <person name="Grimm M."/>
            <person name="Loehnert T.-H."/>
            <person name="Dose S."/>
            <person name="de Haan M."/>
            <person name="Maarse A.C."/>
            <person name="Schaefer M."/>
            <person name="Mueller-Auer S."/>
            <person name="Gabel C."/>
            <person name="Fuchs M."/>
            <person name="Fartmann B."/>
            <person name="Granderath K."/>
            <person name="Dauner D."/>
            <person name="Herzl A."/>
            <person name="Neumann S."/>
            <person name="Argiriou A."/>
            <person name="Vitale D."/>
            <person name="Liguori R."/>
            <person name="Piravandi E."/>
            <person name="Massenet O."/>
            <person name="Quigley F."/>
            <person name="Clabauld G."/>
            <person name="Muendlein A."/>
            <person name="Felber R."/>
            <person name="Schnabl S."/>
            <person name="Hiller R."/>
            <person name="Schmidt W."/>
            <person name="Lecharny A."/>
            <person name="Aubourg S."/>
            <person name="Chefdor F."/>
            <person name="Cooke R."/>
            <person name="Berger C."/>
            <person name="Monfort A."/>
            <person name="Casacuberta E."/>
            <person name="Gibbons T."/>
            <person name="Weber N."/>
            <person name="Vandenbol M."/>
            <person name="Bargues M."/>
            <person name="Terol J."/>
            <person name="Torres A."/>
            <person name="Perez-Perez A."/>
            <person name="Purnelle B."/>
            <person name="Bent E."/>
            <person name="Johnson S."/>
            <person name="Tacon D."/>
            <person name="Jesse T."/>
            <person name="Heijnen L."/>
            <person name="Schwarz S."/>
            <person name="Scholler P."/>
            <person name="Heber S."/>
            <person name="Francs P."/>
            <person name="Bielke C."/>
            <person name="Frishman D."/>
            <person name="Haase D."/>
            <person name="Lemcke K."/>
            <person name="Mewes H.-W."/>
            <person name="Stocker S."/>
            <person name="Zaccaria P."/>
            <person name="Bevan M."/>
            <person name="Wilson R.K."/>
            <person name="de la Bastide M."/>
            <person name="Habermann K."/>
            <person name="Parnell L."/>
            <person name="Dedhia N."/>
            <person name="Gnoj L."/>
            <person name="Schutz K."/>
            <person name="Huang E."/>
            <person name="Spiegel L."/>
            <person name="Sekhon M."/>
            <person name="Murray J."/>
            <person name="Sheet P."/>
            <person name="Cordes M."/>
            <person name="Abu-Threideh J."/>
            <person name="Stoneking T."/>
            <person name="Kalicki J."/>
            <person name="Graves T."/>
            <person name="Harmon G."/>
            <person name="Edwards J."/>
            <person name="Latreille P."/>
            <person name="Courtney L."/>
            <person name="Cloud J."/>
            <person name="Abbott A."/>
            <person name="Scott K."/>
            <person name="Johnson D."/>
            <person name="Minx P."/>
            <person name="Bentley D."/>
            <person name="Fulton B."/>
            <person name="Miller N."/>
            <person name="Greco T."/>
            <person name="Kemp K."/>
            <person name="Kramer J."/>
            <person name="Fulton L."/>
            <person name="Mardis E."/>
            <person name="Dante M."/>
            <person name="Pepin K."/>
            <person name="Hillier L.W."/>
            <person name="Nelson J."/>
            <person name="Spieth J."/>
            <person name="Ryan E."/>
            <person name="Andrews S."/>
            <person name="Geisel C."/>
            <person name="Layman D."/>
            <person name="Du H."/>
            <person name="Ali J."/>
            <person name="Berghoff A."/>
            <person name="Jones K."/>
            <person name="Drone K."/>
            <person name="Cotton M."/>
            <person name="Joshu C."/>
            <person name="Antonoiu B."/>
            <person name="Zidanic M."/>
            <person name="Strong C."/>
            <person name="Sun H."/>
            <person name="Lamar B."/>
            <person name="Yordan C."/>
            <person name="Ma P."/>
            <person name="Zhong J."/>
            <person name="Preston R."/>
            <person name="Vil D."/>
            <person name="Shekher M."/>
            <person name="Matero A."/>
            <person name="Shah R."/>
            <person name="Swaby I.K."/>
            <person name="O'Shaughnessy A."/>
            <person name="Rodriguez M."/>
            <person name="Hoffman J."/>
            <person name="Till S."/>
            <person name="Granat S."/>
            <person name="Shohdy N."/>
            <person name="Hasegawa A."/>
            <person name="Hameed A."/>
            <person name="Lodhi M."/>
            <person name="Johnson A."/>
            <person name="Chen E."/>
            <person name="Marra M.A."/>
            <person name="Martienssen R."/>
            <person name="McCombie W.R."/>
        </authorList>
    </citation>
    <scope>NUCLEOTIDE SEQUENCE [LARGE SCALE GENOMIC DNA]</scope>
    <source>
        <strain>cv. Columbia</strain>
    </source>
</reference>
<reference key="2">
    <citation type="journal article" date="2017" name="Plant J.">
        <title>Araport11: a complete reannotation of the Arabidopsis thaliana reference genome.</title>
        <authorList>
            <person name="Cheng C.Y."/>
            <person name="Krishnakumar V."/>
            <person name="Chan A.P."/>
            <person name="Thibaud-Nissen F."/>
            <person name="Schobel S."/>
            <person name="Town C.D."/>
        </authorList>
    </citation>
    <scope>GENOME REANNOTATION</scope>
    <source>
        <strain>cv. Columbia</strain>
    </source>
</reference>
<protein>
    <recommendedName>
        <fullName>Putative F-box protein At4g05475</fullName>
    </recommendedName>
</protein>
<feature type="chain" id="PRO_0000283490" description="Putative F-box protein At4g05475">
    <location>
        <begin position="1"/>
        <end position="309"/>
    </location>
</feature>
<feature type="domain" description="F-box" evidence="1">
    <location>
        <begin position="37"/>
        <end position="84"/>
    </location>
</feature>
<feature type="region of interest" description="Disordered" evidence="2">
    <location>
        <begin position="1"/>
        <end position="26"/>
    </location>
</feature>
<comment type="sequence caution" evidence="3">
    <conflict type="erroneous gene model prediction">
        <sequence resource="EMBL-CDS" id="CAB81090"/>
    </conflict>
</comment>
<accession>Q9M0U7</accession>
<accession>F4JGG7</accession>
<organism>
    <name type="scientific">Arabidopsis thaliana</name>
    <name type="common">Mouse-ear cress</name>
    <dbReference type="NCBI Taxonomy" id="3702"/>
    <lineage>
        <taxon>Eukaryota</taxon>
        <taxon>Viridiplantae</taxon>
        <taxon>Streptophyta</taxon>
        <taxon>Embryophyta</taxon>
        <taxon>Tracheophyta</taxon>
        <taxon>Spermatophyta</taxon>
        <taxon>Magnoliopsida</taxon>
        <taxon>eudicotyledons</taxon>
        <taxon>Gunneridae</taxon>
        <taxon>Pentapetalae</taxon>
        <taxon>rosids</taxon>
        <taxon>malvids</taxon>
        <taxon>Brassicales</taxon>
        <taxon>Brassicaceae</taxon>
        <taxon>Camelineae</taxon>
        <taxon>Arabidopsis</taxon>
    </lineage>
</organism>
<keyword id="KW-1185">Reference proteome</keyword>